<protein>
    <recommendedName>
        <fullName evidence="7">Probable ethylene response sensor 2</fullName>
        <shortName evidence="6">OsERS2</shortName>
        <ecNumber evidence="7">2.7.13.3</ecNumber>
    </recommendedName>
    <alternativeName>
        <fullName evidence="6">Ethylene response factor 2</fullName>
    </alternativeName>
</protein>
<keyword id="KW-0025">Alternative splicing</keyword>
<keyword id="KW-0067">ATP-binding</keyword>
<keyword id="KW-0186">Copper</keyword>
<keyword id="KW-1015">Disulfide bond</keyword>
<keyword id="KW-0256">Endoplasmic reticulum</keyword>
<keyword id="KW-0936">Ethylene signaling pathway</keyword>
<keyword id="KW-0418">Kinase</keyword>
<keyword id="KW-0472">Membrane</keyword>
<keyword id="KW-0479">Metal-binding</keyword>
<keyword id="KW-0547">Nucleotide-binding</keyword>
<keyword id="KW-0597">Phosphoprotein</keyword>
<keyword id="KW-0675">Receptor</keyword>
<keyword id="KW-1185">Reference proteome</keyword>
<keyword id="KW-0808">Transferase</keyword>
<keyword id="KW-0812">Transmembrane</keyword>
<keyword id="KW-1133">Transmembrane helix</keyword>
<keyword id="KW-0902">Two-component regulatory system</keyword>
<name>ERS2_ORYSJ</name>
<dbReference type="EC" id="2.7.13.3" evidence="7"/>
<dbReference type="EMBL" id="AC087551">
    <property type="protein sequence ID" value="AAV32219.1"/>
    <property type="molecule type" value="Genomic_DNA"/>
</dbReference>
<dbReference type="EMBL" id="AP008211">
    <property type="protein sequence ID" value="BAF16603.1"/>
    <property type="molecule type" value="Genomic_DNA"/>
</dbReference>
<dbReference type="EMBL" id="AP014961">
    <property type="protein sequence ID" value="BAS92353.1"/>
    <property type="molecule type" value="Genomic_DNA"/>
</dbReference>
<dbReference type="EMBL" id="CM000142">
    <property type="protein sequence ID" value="EEE62384.1"/>
    <property type="molecule type" value="Genomic_DNA"/>
</dbReference>
<dbReference type="EMBL" id="AK111696">
    <property type="protein sequence ID" value="BAG99370.1"/>
    <property type="molecule type" value="mRNA"/>
</dbReference>
<dbReference type="RefSeq" id="XP_015639200.1">
    <property type="nucleotide sequence ID" value="XM_015783714.1"/>
</dbReference>
<dbReference type="SMR" id="Q0DKM0"/>
<dbReference type="FunCoup" id="Q0DKM0">
    <property type="interactions" value="137"/>
</dbReference>
<dbReference type="STRING" id="39947.Q0DKM0"/>
<dbReference type="PaxDb" id="39947-Q0DKM0"/>
<dbReference type="KEGG" id="dosa:Os05g0155200"/>
<dbReference type="eggNOG" id="KOG0519">
    <property type="taxonomic scope" value="Eukaryota"/>
</dbReference>
<dbReference type="InParanoid" id="Q0DKM0"/>
<dbReference type="OrthoDB" id="60033at2759"/>
<dbReference type="PlantReactome" id="R-OSA-5225756">
    <property type="pathway name" value="Ethylene mediated signaling"/>
</dbReference>
<dbReference type="Proteomes" id="UP000000763">
    <property type="component" value="Chromosome 5"/>
</dbReference>
<dbReference type="Proteomes" id="UP000007752">
    <property type="component" value="Chromosome 5"/>
</dbReference>
<dbReference type="Proteomes" id="UP000059680">
    <property type="component" value="Chromosome 5"/>
</dbReference>
<dbReference type="GO" id="GO:0005783">
    <property type="term" value="C:endoplasmic reticulum"/>
    <property type="evidence" value="ECO:0000318"/>
    <property type="project" value="GO_Central"/>
</dbReference>
<dbReference type="GO" id="GO:0005789">
    <property type="term" value="C:endoplasmic reticulum membrane"/>
    <property type="evidence" value="ECO:0007669"/>
    <property type="project" value="UniProtKB-SubCell"/>
</dbReference>
<dbReference type="GO" id="GO:0005524">
    <property type="term" value="F:ATP binding"/>
    <property type="evidence" value="ECO:0007669"/>
    <property type="project" value="UniProtKB-KW"/>
</dbReference>
<dbReference type="GO" id="GO:0051740">
    <property type="term" value="F:ethylene binding"/>
    <property type="evidence" value="ECO:0000318"/>
    <property type="project" value="GO_Central"/>
</dbReference>
<dbReference type="GO" id="GO:0038199">
    <property type="term" value="F:ethylene receptor activity"/>
    <property type="evidence" value="ECO:0000318"/>
    <property type="project" value="GO_Central"/>
</dbReference>
<dbReference type="GO" id="GO:0046872">
    <property type="term" value="F:metal ion binding"/>
    <property type="evidence" value="ECO:0007669"/>
    <property type="project" value="UniProtKB-KW"/>
</dbReference>
<dbReference type="GO" id="GO:0000155">
    <property type="term" value="F:phosphorelay sensor kinase activity"/>
    <property type="evidence" value="ECO:0007669"/>
    <property type="project" value="InterPro"/>
</dbReference>
<dbReference type="GO" id="GO:0010105">
    <property type="term" value="P:negative regulation of ethylene-activated signaling pathway"/>
    <property type="evidence" value="ECO:0007669"/>
    <property type="project" value="UniProtKB-ARBA"/>
</dbReference>
<dbReference type="CDD" id="cd00082">
    <property type="entry name" value="HisKA"/>
    <property type="match status" value="1"/>
</dbReference>
<dbReference type="FunFam" id="1.10.287.130:FF:000004">
    <property type="entry name" value="Ethylene receptor 1"/>
    <property type="match status" value="1"/>
</dbReference>
<dbReference type="FunFam" id="3.30.565.10:FF:000030">
    <property type="entry name" value="Ethylene receptor 1"/>
    <property type="match status" value="1"/>
</dbReference>
<dbReference type="FunFam" id="3.30.450.40:FF:000026">
    <property type="entry name" value="Ethylene response sensor"/>
    <property type="match status" value="1"/>
</dbReference>
<dbReference type="Gene3D" id="1.10.287.130">
    <property type="match status" value="1"/>
</dbReference>
<dbReference type="Gene3D" id="3.30.450.40">
    <property type="match status" value="1"/>
</dbReference>
<dbReference type="Gene3D" id="3.30.565.10">
    <property type="entry name" value="Histidine kinase-like ATPase, C-terminal domain"/>
    <property type="match status" value="1"/>
</dbReference>
<dbReference type="InterPro" id="IPR003018">
    <property type="entry name" value="GAF"/>
</dbReference>
<dbReference type="InterPro" id="IPR029016">
    <property type="entry name" value="GAF-like_dom_sf"/>
</dbReference>
<dbReference type="InterPro" id="IPR036890">
    <property type="entry name" value="HATPase_C_sf"/>
</dbReference>
<dbReference type="InterPro" id="IPR005467">
    <property type="entry name" value="His_kinase_dom"/>
</dbReference>
<dbReference type="InterPro" id="IPR003661">
    <property type="entry name" value="HisK_dim/P_dom"/>
</dbReference>
<dbReference type="InterPro" id="IPR036097">
    <property type="entry name" value="HisK_dim/P_sf"/>
</dbReference>
<dbReference type="InterPro" id="IPR004358">
    <property type="entry name" value="Sig_transdc_His_kin-like_C"/>
</dbReference>
<dbReference type="PANTHER" id="PTHR24423:SF639">
    <property type="entry name" value="ETHYLENE RESPONSE SENSOR 2-RELATED"/>
    <property type="match status" value="1"/>
</dbReference>
<dbReference type="PANTHER" id="PTHR24423">
    <property type="entry name" value="TWO-COMPONENT SENSOR HISTIDINE KINASE"/>
    <property type="match status" value="1"/>
</dbReference>
<dbReference type="Pfam" id="PF25487">
    <property type="entry name" value="ETR1_N"/>
    <property type="match status" value="1"/>
</dbReference>
<dbReference type="Pfam" id="PF01590">
    <property type="entry name" value="GAF"/>
    <property type="match status" value="1"/>
</dbReference>
<dbReference type="Pfam" id="PF02518">
    <property type="entry name" value="HATPase_c"/>
    <property type="match status" value="1"/>
</dbReference>
<dbReference type="Pfam" id="PF00512">
    <property type="entry name" value="HisKA"/>
    <property type="match status" value="1"/>
</dbReference>
<dbReference type="PRINTS" id="PR00344">
    <property type="entry name" value="BCTRLSENSOR"/>
</dbReference>
<dbReference type="SMART" id="SM00065">
    <property type="entry name" value="GAF"/>
    <property type="match status" value="1"/>
</dbReference>
<dbReference type="SMART" id="SM00387">
    <property type="entry name" value="HATPase_c"/>
    <property type="match status" value="1"/>
</dbReference>
<dbReference type="SMART" id="SM00388">
    <property type="entry name" value="HisKA"/>
    <property type="match status" value="1"/>
</dbReference>
<dbReference type="SUPFAM" id="SSF55874">
    <property type="entry name" value="ATPase domain of HSP90 chaperone/DNA topoisomerase II/histidine kinase"/>
    <property type="match status" value="1"/>
</dbReference>
<dbReference type="SUPFAM" id="SSF55781">
    <property type="entry name" value="GAF domain-like"/>
    <property type="match status" value="1"/>
</dbReference>
<dbReference type="SUPFAM" id="SSF47384">
    <property type="entry name" value="Homodimeric domain of signal transducing histidine kinase"/>
    <property type="match status" value="1"/>
</dbReference>
<dbReference type="PROSITE" id="PS50109">
    <property type="entry name" value="HIS_KIN"/>
    <property type="match status" value="1"/>
</dbReference>
<comment type="function">
    <text evidence="5">Ethylene receptor related to bacterial two-component regulators. Acts as a negative regulator of ethylene signaling. May play a role in the regulation of flowering by up-regulating GI (GIGANTEA) and RCN1 and regulate starch accumulation by down-regulating the alpha-amylase AMY3D.</text>
</comment>
<comment type="catalytic activity">
    <reaction evidence="7">
        <text>ATP + protein L-histidine = ADP + protein N-phospho-L-histidine.</text>
        <dbReference type="EC" id="2.7.13.3"/>
    </reaction>
</comment>
<comment type="cofactor">
    <cofactor evidence="1">
        <name>Cu cation</name>
        <dbReference type="ChEBI" id="CHEBI:23378"/>
    </cofactor>
    <text evidence="1">Binds 1 copper ion per dimer.</text>
</comment>
<comment type="subunit">
    <text evidence="1">Homodimer.</text>
</comment>
<comment type="subcellular location">
    <subcellularLocation>
        <location evidence="1">Endoplasmic reticulum membrane</location>
        <topology evidence="2">Multi-pass membrane protein</topology>
    </subcellularLocation>
</comment>
<comment type="alternative products">
    <event type="alternative splicing"/>
    <isoform>
        <id>Q0DKM0-1</id>
        <name>1</name>
        <sequence type="displayed"/>
    </isoform>
    <isoform>
        <id>Q0DKM0-2</id>
        <name>2</name>
        <sequence type="described" ref="VSP_057846"/>
    </isoform>
</comment>
<comment type="disruption phenotype">
    <text evidence="4 5">Chlorina phenotype (PubMed:16891544). Enhanced ethylene sensitivity (PubMed:19417056).</text>
</comment>
<comment type="similarity">
    <text evidence="7">Belongs to the ethylene receptor family.</text>
</comment>
<feature type="chain" id="PRO_0000433863" description="Probable ethylene response sensor 2">
    <location>
        <begin position="1"/>
        <end position="635"/>
    </location>
</feature>
<feature type="transmembrane region" description="Helical" evidence="2">
    <location>
        <begin position="24"/>
        <end position="44"/>
    </location>
</feature>
<feature type="transmembrane region" description="Helical" evidence="2">
    <location>
        <begin position="59"/>
        <end position="79"/>
    </location>
</feature>
<feature type="transmembrane region" description="Helical" evidence="2">
    <location>
        <begin position="94"/>
        <end position="114"/>
    </location>
</feature>
<feature type="domain" description="GAF" evidence="7">
    <location>
        <begin position="159"/>
        <end position="308"/>
    </location>
</feature>
<feature type="domain" description="Histidine kinase" evidence="3">
    <location>
        <begin position="351"/>
        <end position="589"/>
    </location>
</feature>
<feature type="binding site" evidence="1">
    <location>
        <position position="66"/>
    </location>
    <ligand>
        <name>Cu cation</name>
        <dbReference type="ChEBI" id="CHEBI:23378"/>
    </ligand>
</feature>
<feature type="binding site" evidence="1">
    <location>
        <position position="70"/>
    </location>
    <ligand>
        <name>Cu cation</name>
        <dbReference type="ChEBI" id="CHEBI:23378"/>
    </ligand>
</feature>
<feature type="modified residue" description="Phosphohistidine; by autocatalysis" evidence="3">
    <location>
        <position position="354"/>
    </location>
</feature>
<feature type="disulfide bond" description="Interchain" evidence="1">
    <location>
        <position position="5"/>
    </location>
</feature>
<feature type="disulfide bond" description="Interchain" evidence="1">
    <location>
        <position position="7"/>
    </location>
</feature>
<feature type="splice variant" id="VSP_057846" description="In isoform 2.">
    <original>KDTGCGISPQDMPHTFRKFAHPENAGKWNSGSGLGLALSRRFVSLMEGNIWLESEGVGKGCTAMFFVKLGMPEKPNANLRRMAPHPLQPNQGAGGPDALSISIMDSNPRVPRVRYQSSV</original>
    <variation>CS</variation>
    <location>
        <begin position="517"/>
        <end position="635"/>
    </location>
</feature>
<sequence>MDGSCDCIEPLWQADDLLVKYQYISDFFIALAYFSIPLELIYFVKKSAFFPYRWVLIQFGAFIVLCGATHLINLWTFAIYTKTIAVVLTVAKAATAVVSCITALMLVHIIPDLLNVKLRERFLKDKADELDREMGIIRTQEETGRHVHMLTHEIRSTLDRHTILRTTLVELGRTLVLAECALWMPTRSGSALQLSHTIYNSAAIGSVVPINLPIVSKVFNSNRVVKIPHTSPLASITADKSRYVPPEVVAIRVPLLHLTNFQINDWPELSAKSFAVMVLMLPPDSAREWRPHERELVEVVADQVAVALSHAAILEESMRARDLLMEQNIALDAARREAEMAICARNDFLAVMNHEMRTPMRAIVSLSSLLLETNLSAEQRLMVETILKSSDLLATLTNDVLDVSKLENGSLELEIAPFNLHSTFTDVVNLIKPVAACKRLSVMVTLAPELPLHAIGDQKRLMQIILNVAGNSIKFTKEGHVSITASMARPDALRGPHEPDYHPVVSDGFFYLAVQVKDTGCGISPQDMPHTFRKFAHPENAGKWNSGSGLGLALSRRFVSLMEGNIWLESEGVGKGCTAMFFVKLGMPEKPNANLRRMAPHPLQPNQGAGGPDALSISIMDSNPRVPRVRYQSSV</sequence>
<evidence type="ECO:0000250" key="1">
    <source>
        <dbReference type="UniProtKB" id="P49333"/>
    </source>
</evidence>
<evidence type="ECO:0000255" key="2"/>
<evidence type="ECO:0000255" key="3">
    <source>
        <dbReference type="PROSITE-ProRule" id="PRU00107"/>
    </source>
</evidence>
<evidence type="ECO:0000269" key="4">
    <source>
    </source>
</evidence>
<evidence type="ECO:0000269" key="5">
    <source>
    </source>
</evidence>
<evidence type="ECO:0000303" key="6">
    <source>
    </source>
</evidence>
<evidence type="ECO:0000305" key="7"/>
<evidence type="ECO:0000312" key="8">
    <source>
        <dbReference type="EMBL" id="AAV32219.1"/>
    </source>
</evidence>
<evidence type="ECO:0000312" key="9">
    <source>
        <dbReference type="EMBL" id="BAF16603.1"/>
    </source>
</evidence>
<evidence type="ECO:0000312" key="10">
    <source>
        <dbReference type="EMBL" id="EEE62384.1"/>
    </source>
</evidence>
<reference key="1">
    <citation type="journal article" date="2005" name="Mol. Genet. Genomics">
        <title>A fine physical map of the rice chromosome 5.</title>
        <authorList>
            <person name="Cheng C.-H."/>
            <person name="Chung M.C."/>
            <person name="Liu S.-M."/>
            <person name="Chen S.-K."/>
            <person name="Kao F.Y."/>
            <person name="Lin S.-J."/>
            <person name="Hsiao S.-H."/>
            <person name="Tseng I.C."/>
            <person name="Hsing Y.-I.C."/>
            <person name="Wu H.-P."/>
            <person name="Chen C.-S."/>
            <person name="Shaw J.-F."/>
            <person name="Wu J."/>
            <person name="Matsumoto T."/>
            <person name="Sasaki T."/>
            <person name="Chen H.-C."/>
            <person name="Chow T.-Y."/>
        </authorList>
    </citation>
    <scope>NUCLEOTIDE SEQUENCE [LARGE SCALE GENOMIC DNA]</scope>
    <source>
        <strain>cv. Nipponbare</strain>
    </source>
</reference>
<reference key="2">
    <citation type="journal article" date="2005" name="Nature">
        <title>The map-based sequence of the rice genome.</title>
        <authorList>
            <consortium name="International rice genome sequencing project (IRGSP)"/>
        </authorList>
    </citation>
    <scope>NUCLEOTIDE SEQUENCE [LARGE SCALE GENOMIC DNA]</scope>
    <source>
        <strain>cv. Nipponbare</strain>
    </source>
</reference>
<reference key="3">
    <citation type="journal article" date="2008" name="Nucleic Acids Res.">
        <title>The rice annotation project database (RAP-DB): 2008 update.</title>
        <authorList>
            <consortium name="The rice annotation project (RAP)"/>
        </authorList>
    </citation>
    <scope>GENOME REANNOTATION</scope>
    <source>
        <strain>cv. Nipponbare</strain>
    </source>
</reference>
<reference key="4">
    <citation type="journal article" date="2013" name="Rice">
        <title>Improvement of the Oryza sativa Nipponbare reference genome using next generation sequence and optical map data.</title>
        <authorList>
            <person name="Kawahara Y."/>
            <person name="de la Bastide M."/>
            <person name="Hamilton J.P."/>
            <person name="Kanamori H."/>
            <person name="McCombie W.R."/>
            <person name="Ouyang S."/>
            <person name="Schwartz D.C."/>
            <person name="Tanaka T."/>
            <person name="Wu J."/>
            <person name="Zhou S."/>
            <person name="Childs K.L."/>
            <person name="Davidson R.M."/>
            <person name="Lin H."/>
            <person name="Quesada-Ocampo L."/>
            <person name="Vaillancourt B."/>
            <person name="Sakai H."/>
            <person name="Lee S.S."/>
            <person name="Kim J."/>
            <person name="Numa H."/>
            <person name="Itoh T."/>
            <person name="Buell C.R."/>
            <person name="Matsumoto T."/>
        </authorList>
    </citation>
    <scope>GENOME REANNOTATION</scope>
    <source>
        <strain>cv. Nipponbare</strain>
    </source>
</reference>
<reference key="5">
    <citation type="journal article" date="2005" name="PLoS Biol.">
        <title>The genomes of Oryza sativa: a history of duplications.</title>
        <authorList>
            <person name="Yu J."/>
            <person name="Wang J."/>
            <person name="Lin W."/>
            <person name="Li S."/>
            <person name="Li H."/>
            <person name="Zhou J."/>
            <person name="Ni P."/>
            <person name="Dong W."/>
            <person name="Hu S."/>
            <person name="Zeng C."/>
            <person name="Zhang J."/>
            <person name="Zhang Y."/>
            <person name="Li R."/>
            <person name="Xu Z."/>
            <person name="Li S."/>
            <person name="Li X."/>
            <person name="Zheng H."/>
            <person name="Cong L."/>
            <person name="Lin L."/>
            <person name="Yin J."/>
            <person name="Geng J."/>
            <person name="Li G."/>
            <person name="Shi J."/>
            <person name="Liu J."/>
            <person name="Lv H."/>
            <person name="Li J."/>
            <person name="Wang J."/>
            <person name="Deng Y."/>
            <person name="Ran L."/>
            <person name="Shi X."/>
            <person name="Wang X."/>
            <person name="Wu Q."/>
            <person name="Li C."/>
            <person name="Ren X."/>
            <person name="Wang J."/>
            <person name="Wang X."/>
            <person name="Li D."/>
            <person name="Liu D."/>
            <person name="Zhang X."/>
            <person name="Ji Z."/>
            <person name="Zhao W."/>
            <person name="Sun Y."/>
            <person name="Zhang Z."/>
            <person name="Bao J."/>
            <person name="Han Y."/>
            <person name="Dong L."/>
            <person name="Ji J."/>
            <person name="Chen P."/>
            <person name="Wu S."/>
            <person name="Liu J."/>
            <person name="Xiao Y."/>
            <person name="Bu D."/>
            <person name="Tan J."/>
            <person name="Yang L."/>
            <person name="Ye C."/>
            <person name="Zhang J."/>
            <person name="Xu J."/>
            <person name="Zhou Y."/>
            <person name="Yu Y."/>
            <person name="Zhang B."/>
            <person name="Zhuang S."/>
            <person name="Wei H."/>
            <person name="Liu B."/>
            <person name="Lei M."/>
            <person name="Yu H."/>
            <person name="Li Y."/>
            <person name="Xu H."/>
            <person name="Wei S."/>
            <person name="He X."/>
            <person name="Fang L."/>
            <person name="Zhang Z."/>
            <person name="Zhang Y."/>
            <person name="Huang X."/>
            <person name="Su Z."/>
            <person name="Tong W."/>
            <person name="Li J."/>
            <person name="Tong Z."/>
            <person name="Li S."/>
            <person name="Ye J."/>
            <person name="Wang L."/>
            <person name="Fang L."/>
            <person name="Lei T."/>
            <person name="Chen C.-S."/>
            <person name="Chen H.-C."/>
            <person name="Xu Z."/>
            <person name="Li H."/>
            <person name="Huang H."/>
            <person name="Zhang F."/>
            <person name="Xu H."/>
            <person name="Li N."/>
            <person name="Zhao C."/>
            <person name="Li S."/>
            <person name="Dong L."/>
            <person name="Huang Y."/>
            <person name="Li L."/>
            <person name="Xi Y."/>
            <person name="Qi Q."/>
            <person name="Li W."/>
            <person name="Zhang B."/>
            <person name="Hu W."/>
            <person name="Zhang Y."/>
            <person name="Tian X."/>
            <person name="Jiao Y."/>
            <person name="Liang X."/>
            <person name="Jin J."/>
            <person name="Gao L."/>
            <person name="Zheng W."/>
            <person name="Hao B."/>
            <person name="Liu S.-M."/>
            <person name="Wang W."/>
            <person name="Yuan L."/>
            <person name="Cao M."/>
            <person name="McDermott J."/>
            <person name="Samudrala R."/>
            <person name="Wang J."/>
            <person name="Wong G.K.-S."/>
            <person name="Yang H."/>
        </authorList>
    </citation>
    <scope>NUCLEOTIDE SEQUENCE [LARGE SCALE GENOMIC DNA]</scope>
    <source>
        <strain>cv. Nipponbare</strain>
    </source>
</reference>
<reference key="6">
    <citation type="journal article" date="2003" name="Science">
        <title>Collection, mapping, and annotation of over 28,000 cDNA clones from japonica rice.</title>
        <authorList>
            <consortium name="The rice full-length cDNA consortium"/>
        </authorList>
    </citation>
    <scope>NUCLEOTIDE SEQUENCE [LARGE SCALE MRNA] (ISOFORM 2)</scope>
    <source>
        <strain>cv. Nipponbare</strain>
    </source>
</reference>
<reference key="7">
    <citation type="journal article" date="2006" name="Plant Physiol.">
        <title>Whole-genome analysis of Oryza sativa reveals similar architecture of two-component signaling machinery with Arabidopsis.</title>
        <authorList>
            <person name="Pareek A."/>
            <person name="Singh A."/>
            <person name="Kumar M."/>
            <person name="Kushwaha H.R."/>
            <person name="Lynn A.M."/>
            <person name="Singla-Pareek S.L."/>
        </authorList>
    </citation>
    <scope>DISRUPTION PHENOTYPE</scope>
</reference>
<reference key="8">
    <citation type="journal article" date="2009" name="Plant Cell">
        <title>The ethylene receptor ETR2 delays floral transition and affects starch accumulation in rice.</title>
        <authorList>
            <person name="Wuriyanghan H."/>
            <person name="Zhang B."/>
            <person name="Cao W.H."/>
            <person name="Ma B."/>
            <person name="Lei G."/>
            <person name="Liu Y.F."/>
            <person name="Wei W."/>
            <person name="Wu H.J."/>
            <person name="Chen L.J."/>
            <person name="Chen H.W."/>
            <person name="Cao Y.R."/>
            <person name="He S.J."/>
            <person name="Zhang W.K."/>
            <person name="Wang X.J."/>
            <person name="Chen S.Y."/>
            <person name="Zhang J.S."/>
        </authorList>
    </citation>
    <scope>FUNCTION</scope>
    <scope>DISRUPTION PHENOTYPE</scope>
</reference>
<gene>
    <name type="primary">ERS2</name>
    <name evidence="9" type="ordered locus">Os05g0155200</name>
    <name evidence="7" type="ordered locus">LOC_Os05g06320</name>
    <name evidence="10" type="ORF">OsJ_17173</name>
    <name evidence="8" type="ORF">P0431G05.6</name>
</gene>
<organism>
    <name type="scientific">Oryza sativa subsp. japonica</name>
    <name type="common">Rice</name>
    <dbReference type="NCBI Taxonomy" id="39947"/>
    <lineage>
        <taxon>Eukaryota</taxon>
        <taxon>Viridiplantae</taxon>
        <taxon>Streptophyta</taxon>
        <taxon>Embryophyta</taxon>
        <taxon>Tracheophyta</taxon>
        <taxon>Spermatophyta</taxon>
        <taxon>Magnoliopsida</taxon>
        <taxon>Liliopsida</taxon>
        <taxon>Poales</taxon>
        <taxon>Poaceae</taxon>
        <taxon>BOP clade</taxon>
        <taxon>Oryzoideae</taxon>
        <taxon>Oryzeae</taxon>
        <taxon>Oryzinae</taxon>
        <taxon>Oryza</taxon>
        <taxon>Oryza sativa</taxon>
    </lineage>
</organism>
<proteinExistence type="evidence at transcript level"/>
<accession>Q0DKM0</accession>
<accession>Q5WMY2</accession>